<evidence type="ECO:0000255" key="1"/>
<evidence type="ECO:0000269" key="2">
    <source>
    </source>
</evidence>
<evidence type="ECO:0000303" key="3">
    <source>
    </source>
</evidence>
<evidence type="ECO:0000303" key="4">
    <source>
    </source>
</evidence>
<evidence type="ECO:0000305" key="5"/>
<evidence type="ECO:0000305" key="6">
    <source>
    </source>
</evidence>
<evidence type="ECO:0000305" key="7">
    <source>
    </source>
</evidence>
<dbReference type="SMR" id="P0DSK0"/>
<dbReference type="Proteomes" id="UP000515204">
    <property type="component" value="Unplaced"/>
</dbReference>
<dbReference type="GO" id="GO:0005576">
    <property type="term" value="C:extracellular region"/>
    <property type="evidence" value="ECO:0007669"/>
    <property type="project" value="UniProtKB-SubCell"/>
</dbReference>
<dbReference type="GO" id="GO:0016020">
    <property type="term" value="C:membrane"/>
    <property type="evidence" value="ECO:0007669"/>
    <property type="project" value="UniProtKB-KW"/>
</dbReference>
<dbReference type="GO" id="GO:0044218">
    <property type="term" value="C:other organism cell membrane"/>
    <property type="evidence" value="ECO:0007669"/>
    <property type="project" value="UniProtKB-KW"/>
</dbReference>
<dbReference type="GO" id="GO:0098542">
    <property type="term" value="P:defense response to other organism"/>
    <property type="evidence" value="ECO:0007669"/>
    <property type="project" value="InterPro"/>
</dbReference>
<dbReference type="InterPro" id="IPR012523">
    <property type="entry name" value="Antimicrobial_4"/>
</dbReference>
<dbReference type="InterPro" id="IPR049518">
    <property type="entry name" value="Pilosulin"/>
</dbReference>
<dbReference type="Pfam" id="PF08024">
    <property type="entry name" value="Antimicrobial_4"/>
    <property type="match status" value="1"/>
</dbReference>
<dbReference type="Pfam" id="PF17499">
    <property type="entry name" value="Pilosulin"/>
    <property type="match status" value="1"/>
</dbReference>
<organism>
    <name type="scientific">Dinoponera quadriceps</name>
    <name type="common">South American ant</name>
    <dbReference type="NCBI Taxonomy" id="609295"/>
    <lineage>
        <taxon>Eukaryota</taxon>
        <taxon>Metazoa</taxon>
        <taxon>Ecdysozoa</taxon>
        <taxon>Arthropoda</taxon>
        <taxon>Hexapoda</taxon>
        <taxon>Insecta</taxon>
        <taxon>Pterygota</taxon>
        <taxon>Neoptera</taxon>
        <taxon>Endopterygota</taxon>
        <taxon>Hymenoptera</taxon>
        <taxon>Apocrita</taxon>
        <taxon>Aculeata</taxon>
        <taxon>Formicoidea</taxon>
        <taxon>Formicidae</taxon>
        <taxon>Ponerinae</taxon>
        <taxon>Ponerini</taxon>
        <taxon>Dinoponera</taxon>
    </lineage>
</organism>
<keyword id="KW-0929">Antimicrobial</keyword>
<keyword id="KW-0472">Membrane</keyword>
<keyword id="KW-0582">Pharmaceutical</keyword>
<keyword id="KW-1185">Reference proteome</keyword>
<keyword id="KW-0964">Secreted</keyword>
<keyword id="KW-0732">Signal</keyword>
<keyword id="KW-1052">Target cell membrane</keyword>
<keyword id="KW-1053">Target membrane</keyword>
<protein>
    <recommendedName>
        <fullName evidence="3">M-poneratoxin-Dq3a</fullName>
        <shortName evidence="3">M-PONTX-Dq3a</shortName>
    </recommendedName>
    <alternativeName>
        <fullName evidence="3">Dinoponeratoxin</fullName>
        <shortName evidence="3">DnTx</shortName>
    </alternativeName>
    <alternativeName>
        <fullName evidence="3">Peptide sDq-2561</fullName>
    </alternativeName>
    <alternativeName>
        <fullName evidence="5">U-poneritoxin(01)-Dq6a</fullName>
        <shortName evidence="4">PONTX(01)-Dq6</shortName>
        <shortName evidence="5">U-PONTX(01)-Dq6a</shortName>
    </alternativeName>
    <component>
        <recommendedName>
            <fullName evidence="3">M-poneratoxin-Dq3b</fullName>
            <shortName evidence="3">M-PONTX-Dq3b</shortName>
        </recommendedName>
        <alternativeName>
            <fullName evidence="3">Peptide sDq-1503</fullName>
        </alternativeName>
    </component>
    <component>
        <recommendedName>
            <fullName evidence="3">M-poneratoxin-Dq3c</fullName>
            <shortName evidence="3">M-PONTX-Dq3c</shortName>
        </recommendedName>
        <alternativeName>
            <fullName evidence="3">Peptide sDq-1319</fullName>
        </alternativeName>
    </component>
</protein>
<name>TXM3A_DINQU</name>
<reference key="1">
    <citation type="journal article" date="2014" name="PLoS ONE">
        <title>Transcriptome analysis in venom gland of the predatory giant ant Dinoponera quadriceps: insights into the polypeptide toxin arsenal of hymenopterans.</title>
        <authorList>
            <person name="Torres A.F."/>
            <person name="Huang C."/>
            <person name="Chong C.M."/>
            <person name="Leung S.W."/>
            <person name="Prieto-da-Silva A.R."/>
            <person name="Havt A."/>
            <person name="Quinet Y.P."/>
            <person name="Martins A.M."/>
            <person name="Lee S.M."/>
            <person name="Radis-Baptista G."/>
        </authorList>
    </citation>
    <scope>NUCLEOTIDE SEQUENCE [MRNA]</scope>
    <source>
        <tissue>Venom gland</tissue>
    </source>
</reference>
<reference key="2">
    <citation type="journal article" date="2018" name="Biol. Chem.">
        <title>The dinoponeratoxin peptides from the giant ant Dinoponera quadriceps display in vitro antitrypanosomal activity.</title>
        <authorList>
            <person name="Lima D.B."/>
            <person name="Mello C.P."/>
            <person name="Bandeira I.C.J."/>
            <person name="Pessoa Bezerra de Menezes R.R.P."/>
            <person name="Sampaio T.L."/>
            <person name="Falcao C.B."/>
            <person name="Morlighem J.R.L."/>
            <person name="Radis-Baptista G."/>
            <person name="Martins A.M.C."/>
        </authorList>
    </citation>
    <scope>FUNCTION</scope>
    <scope>SYNTHESIS OF 44-54; 44-56 AND 44-66</scope>
    <scope>PHARMACEUTICAL</scope>
</reference>
<reference key="3">
    <citation type="journal article" date="2018" name="Sci. Adv.">
        <title>A comprehensive portrait of the venom of the giant red bull ant, Myrmecia gulosa, reveals a hyperdiverse hymenopteran toxin gene family.</title>
        <authorList>
            <person name="Robinson S.D."/>
            <person name="Mueller A."/>
            <person name="Clayton D."/>
            <person name="Starobova H."/>
            <person name="Hamilton B.R."/>
            <person name="Payne R.J."/>
            <person name="Vetter I."/>
            <person name="King G.F."/>
            <person name="Undheim E.A.B."/>
        </authorList>
    </citation>
    <scope>NOMENCLATURE</scope>
</reference>
<sequence length="66" mass="7079">MKLSALSIIFGMILVMTIMYTKAEAEAEAEADADADAKAEAEAFWGTLAKWALKAIPAAMGMKQNK</sequence>
<proteinExistence type="inferred from homology"/>
<comment type="function">
    <molecule>M-poneratoxin-Dq3a</molecule>
    <text evidence="2 5">May have antimicrobial properties by disrupting the integrity of the bacterial cell membrane (Probable). In addition, when tested in vitro on the parasite Trypanosoma cruzi (responsible of the Chagas disease), is able to potently reduce the number of the three forms (epimastigote, trypomastigote and amastigote) by inducing cell death through necrosis (PubMed:28976889).</text>
</comment>
<comment type="function">
    <molecule>M-poneratoxin-Dq3b</molecule>
    <text evidence="2 5">May have antimicrobial properties by disrupting the integrity of the bacterial cell membrane (Probable). In addition, when tested in vitro on the parasite Trypanosoma cruzi (responsible of the Chagas disease), is able to moderately reduce the number of the forms epimastigote and trypomastigote. Its activity on the amastigote form has not been tested (PubMed:28976889).</text>
</comment>
<comment type="function">
    <molecule>M-poneratoxin-Dq3c</molecule>
    <text evidence="2 5">May have antimicrobial properties by disrupting the integrity of the bacterial cell membrane (Probable). In addition, when tested in vitro on the parasite Trypanosoma cruzi (responsible of the Chagas disease), shows only a weak reduction of the number of the trypomastigote forms. Has no activity on the epimastigote forms. Its activity on the amastigote form has not been tested (PubMed:28976889).</text>
</comment>
<comment type="subcellular location">
    <subcellularLocation>
        <location evidence="6">Secreted</location>
    </subcellularLocation>
    <subcellularLocation>
        <location evidence="5">Target cell membrane</location>
    </subcellularLocation>
</comment>
<comment type="tissue specificity">
    <text evidence="6">Expressed by the venom gland.</text>
</comment>
<comment type="pharmaceutical">
    <molecule>M-poneratoxin-Dq3a</molecule>
    <text evidence="7">Promising drug candidate or lead for the development of new drugs to treat Chagas disease (also called American Trypanosomiasis). Shows a high selectivity index (SI) of 80 to the trypomastigote forms.</text>
</comment>
<comment type="similarity">
    <text evidence="5">Belongs to the non-disulfide-bridged peptide (NDBP) superfamily. Medium-length antimicrobial peptide (group 3) family. Ponericin-W subfamily.</text>
</comment>
<comment type="caution">
    <text evidence="7">It is not indicated if M-poneratoxin-Dq3b and M-poneratoxin-Dq3c have been predicted from the transcriptome or found as mature peptides in the peptidome. Authors indicate they have been cleaved from M-poneratoxin-Dq3a and amidated.</text>
</comment>
<comment type="online information" name="National Center for Biotechnology Information (NCBI)">
    <link uri="https://www.ncbi.nlm.nih.gov/nuccore/GANS01000001"/>
</comment>
<feature type="signal peptide" evidence="1">
    <location>
        <begin position="1"/>
        <end position="23"/>
    </location>
</feature>
<feature type="propeptide" id="PRO_0000447082" evidence="6">
    <location>
        <begin position="24"/>
        <end position="43"/>
    </location>
</feature>
<feature type="peptide" id="PRO_0000447083" description="M-poneratoxin-Dq3a" evidence="6">
    <location>
        <begin position="44"/>
        <end position="66"/>
    </location>
</feature>
<feature type="peptide" id="PRO_0000451099" description="M-poneratoxin-Dq3b" evidence="7">
    <location>
        <begin position="44"/>
        <end position="56"/>
    </location>
</feature>
<feature type="peptide" id="PRO_0000451100" description="M-poneratoxin-Dq3c" evidence="7">
    <location>
        <begin position="44"/>
        <end position="54"/>
    </location>
</feature>
<accession>P0DSK0</accession>